<name>PGAM5_RAT</name>
<comment type="function">
    <text evidence="2 4">Mitochondrial serine/threonine phosphatase that dephosphorylates various substrates and thus plays a role in different biological processes including cellular senescence or mitophagy. Modulates cellular senescence by regulating mitochondrial dynamics. Mechanistically, participates in mitochondrial fission through dephosphorylating DNM1L/DRP1. Additionally, dephosphorylates MFN2 in a stress-sensitive manner and consequently protects it from ubiquitination and degradation to promote mitochondrial network formation. Regulates mitophagy independent of PARKIN by interacting with and dephosphorylating FUNDC1, which interacts with LC3. Regulates anti-oxidative response by forming a tertiary complex with KEAP1 and NRF2 (By similarity). Regulates necroptosis by acting as a RIPK3 target and recruiting the RIPK1-RIPK3-MLKL necrosis 'attack' complex to mitochondria (PubMed:22265414).</text>
</comment>
<comment type="catalytic activity">
    <reaction evidence="2">
        <text>O-phospho-L-seryl-[protein] + H2O = L-seryl-[protein] + phosphate</text>
        <dbReference type="Rhea" id="RHEA:20629"/>
        <dbReference type="Rhea" id="RHEA-COMP:9863"/>
        <dbReference type="Rhea" id="RHEA-COMP:11604"/>
        <dbReference type="ChEBI" id="CHEBI:15377"/>
        <dbReference type="ChEBI" id="CHEBI:29999"/>
        <dbReference type="ChEBI" id="CHEBI:43474"/>
        <dbReference type="ChEBI" id="CHEBI:83421"/>
        <dbReference type="EC" id="3.1.3.16"/>
    </reaction>
</comment>
<comment type="catalytic activity">
    <reaction evidence="2">
        <text>O-phospho-L-threonyl-[protein] + H2O = L-threonyl-[protein] + phosphate</text>
        <dbReference type="Rhea" id="RHEA:47004"/>
        <dbReference type="Rhea" id="RHEA-COMP:11060"/>
        <dbReference type="Rhea" id="RHEA-COMP:11605"/>
        <dbReference type="ChEBI" id="CHEBI:15377"/>
        <dbReference type="ChEBI" id="CHEBI:30013"/>
        <dbReference type="ChEBI" id="CHEBI:43474"/>
        <dbReference type="ChEBI" id="CHEBI:61977"/>
        <dbReference type="EC" id="3.1.3.16"/>
    </reaction>
</comment>
<comment type="subunit">
    <text evidence="2">Dimer. Forms a ternary complex with NFE2L2 and KEAP1. Interacts with BCL2L1 and MAP3K5. Upon TNF-induced necrosis, forms in complex with RIPK1, RIPK3 and MLKL; the formation of this complex leads to PGAM5 phosphorylation. Isoform 2, but not isoform 1, interacts with DNM1L; this interaction leads to DNM1L dephosphorylation and activation and eventually to mitochondria fragmentation.</text>
</comment>
<comment type="subcellular location">
    <subcellularLocation>
        <location evidence="2">Mitochondrion outer membrane</location>
        <topology evidence="3">Single-pass membrane protein</topology>
    </subcellularLocation>
    <subcellularLocation>
        <location evidence="2">Mitochondrion inner membrane</location>
        <topology evidence="3">Single-pass membrane protein</topology>
    </subcellularLocation>
</comment>
<comment type="domain">
    <text evidence="1">The N-terminal 35 amino acids, including the potential transmembrane alpha-helix, function as a non-cleaved mitochondrial targeting sequence that targets the protein to the cytosolic side of the outer mitochondrial membrane.</text>
</comment>
<comment type="PTM">
    <text evidence="1">Phosphorylated by the RIPK1/RIPK3 complex under necrotic conditions. This phosphorylation increases PGAM5 phosphatase activity (By similarity).</text>
</comment>
<comment type="PTM">
    <text evidence="2">Proteolytically cleaved by PARL in response to loss of mitochondrial membrane potential.</text>
</comment>
<comment type="similarity">
    <text evidence="5">Belongs to the phosphoglycerate mutase family. BPG-dependent PGAM subfamily.</text>
</comment>
<evidence type="ECO:0000250" key="1"/>
<evidence type="ECO:0000250" key="2">
    <source>
        <dbReference type="UniProtKB" id="Q96HS1"/>
    </source>
</evidence>
<evidence type="ECO:0000255" key="3"/>
<evidence type="ECO:0000269" key="4">
    <source>
    </source>
</evidence>
<evidence type="ECO:0000305" key="5"/>
<gene>
    <name type="primary">Pgam5</name>
</gene>
<dbReference type="EC" id="3.1.3.16"/>
<dbReference type="EMBL" id="BC092607">
    <property type="protein sequence ID" value="AAH92607.1"/>
    <property type="molecule type" value="mRNA"/>
</dbReference>
<dbReference type="RefSeq" id="NP_001020443.1">
    <property type="nucleotide sequence ID" value="NM_001025272.1"/>
</dbReference>
<dbReference type="SMR" id="Q562B5"/>
<dbReference type="BioGRID" id="252666">
    <property type="interactions" value="2"/>
</dbReference>
<dbReference type="FunCoup" id="Q562B5">
    <property type="interactions" value="2568"/>
</dbReference>
<dbReference type="IntAct" id="Q562B5">
    <property type="interactions" value="1"/>
</dbReference>
<dbReference type="MINT" id="Q562B5"/>
<dbReference type="STRING" id="10116.ENSRNOP00000053513"/>
<dbReference type="iPTMnet" id="Q562B5"/>
<dbReference type="PhosphoSitePlus" id="Q562B5"/>
<dbReference type="jPOST" id="Q562B5"/>
<dbReference type="PaxDb" id="10116-ENSRNOP00000053513"/>
<dbReference type="GeneID" id="288731"/>
<dbReference type="KEGG" id="rno:288731"/>
<dbReference type="UCSC" id="RGD:1312028">
    <property type="organism name" value="rat"/>
</dbReference>
<dbReference type="AGR" id="RGD:1312028"/>
<dbReference type="CTD" id="192111"/>
<dbReference type="RGD" id="1312028">
    <property type="gene designation" value="Pgam5"/>
</dbReference>
<dbReference type="eggNOG" id="KOG4609">
    <property type="taxonomic scope" value="Eukaryota"/>
</dbReference>
<dbReference type="InParanoid" id="Q562B5"/>
<dbReference type="OrthoDB" id="21501at9989"/>
<dbReference type="PhylomeDB" id="Q562B5"/>
<dbReference type="Reactome" id="R-RNO-8934903">
    <property type="pathway name" value="Receptor Mediated Mitophagy"/>
</dbReference>
<dbReference type="Reactome" id="R-RNO-9861718">
    <property type="pathway name" value="Regulation of pyruvate metabolism"/>
</dbReference>
<dbReference type="PRO" id="PR:Q562B5"/>
<dbReference type="Proteomes" id="UP000002494">
    <property type="component" value="Unplaced"/>
</dbReference>
<dbReference type="GO" id="GO:0005743">
    <property type="term" value="C:mitochondrial inner membrane"/>
    <property type="evidence" value="ECO:0000266"/>
    <property type="project" value="RGD"/>
</dbReference>
<dbReference type="GO" id="GO:0005741">
    <property type="term" value="C:mitochondrial outer membrane"/>
    <property type="evidence" value="ECO:0007669"/>
    <property type="project" value="UniProtKB-SubCell"/>
</dbReference>
<dbReference type="GO" id="GO:0005739">
    <property type="term" value="C:mitochondrion"/>
    <property type="evidence" value="ECO:0000318"/>
    <property type="project" value="GO_Central"/>
</dbReference>
<dbReference type="GO" id="GO:0005096">
    <property type="term" value="F:GTPase activator activity"/>
    <property type="evidence" value="ECO:0000266"/>
    <property type="project" value="RGD"/>
</dbReference>
<dbReference type="GO" id="GO:0004721">
    <property type="term" value="F:phosphoprotein phosphatase activity"/>
    <property type="evidence" value="ECO:0000266"/>
    <property type="project" value="RGD"/>
</dbReference>
<dbReference type="GO" id="GO:0004722">
    <property type="term" value="F:protein serine/threonine phosphatase activity"/>
    <property type="evidence" value="ECO:0000266"/>
    <property type="project" value="RGD"/>
</dbReference>
<dbReference type="GO" id="GO:0044877">
    <property type="term" value="F:protein-containing complex binding"/>
    <property type="evidence" value="ECO:0000266"/>
    <property type="project" value="RGD"/>
</dbReference>
<dbReference type="GO" id="GO:0070266">
    <property type="term" value="P:necroptotic process"/>
    <property type="evidence" value="ECO:0000266"/>
    <property type="project" value="RGD"/>
</dbReference>
<dbReference type="GO" id="GO:0120163">
    <property type="term" value="P:negative regulation of cold-induced thermogenesis"/>
    <property type="evidence" value="ECO:0000250"/>
    <property type="project" value="YuBioLab"/>
</dbReference>
<dbReference type="GO" id="GO:0090141">
    <property type="term" value="P:positive regulation of mitochondrial fission"/>
    <property type="evidence" value="ECO:0000318"/>
    <property type="project" value="GO_Central"/>
</dbReference>
<dbReference type="CDD" id="cd07067">
    <property type="entry name" value="HP_PGM_like"/>
    <property type="match status" value="1"/>
</dbReference>
<dbReference type="FunFam" id="3.40.50.1240:FF:000009">
    <property type="entry name" value="serine/threonine-protein phosphatase PGAM5, mitochondrial isoform X1"/>
    <property type="match status" value="1"/>
</dbReference>
<dbReference type="Gene3D" id="3.40.50.1240">
    <property type="entry name" value="Phosphoglycerate mutase-like"/>
    <property type="match status" value="1"/>
</dbReference>
<dbReference type="InterPro" id="IPR013078">
    <property type="entry name" value="His_Pase_superF_clade-1"/>
</dbReference>
<dbReference type="InterPro" id="IPR029033">
    <property type="entry name" value="His_PPase_superfam"/>
</dbReference>
<dbReference type="InterPro" id="IPR051021">
    <property type="entry name" value="Mito_Ser/Thr_phosphatase"/>
</dbReference>
<dbReference type="PANTHER" id="PTHR20935">
    <property type="entry name" value="PHOSPHOGLYCERATE MUTASE-RELATED"/>
    <property type="match status" value="1"/>
</dbReference>
<dbReference type="PANTHER" id="PTHR20935:SF0">
    <property type="entry name" value="SERINE_THREONINE-PROTEIN PHOSPHATASE PGAM5, MITOCHONDRIAL"/>
    <property type="match status" value="1"/>
</dbReference>
<dbReference type="Pfam" id="PF00300">
    <property type="entry name" value="His_Phos_1"/>
    <property type="match status" value="1"/>
</dbReference>
<dbReference type="SMART" id="SM00855">
    <property type="entry name" value="PGAM"/>
    <property type="match status" value="1"/>
</dbReference>
<dbReference type="SUPFAM" id="SSF53254">
    <property type="entry name" value="Phosphoglycerate mutase-like"/>
    <property type="match status" value="1"/>
</dbReference>
<reference key="1">
    <citation type="journal article" date="2004" name="Genome Res.">
        <title>The status, quality, and expansion of the NIH full-length cDNA project: the Mammalian Gene Collection (MGC).</title>
        <authorList>
            <consortium name="The MGC Project Team"/>
        </authorList>
    </citation>
    <scope>NUCLEOTIDE SEQUENCE [LARGE SCALE MRNA]</scope>
    <source>
        <tissue>Ovary</tissue>
    </source>
</reference>
<reference key="2">
    <citation type="journal article" date="2012" name="Cell">
        <title>The mitochondrial phosphatase PGAM5 functions at the convergence point of multiple necrotic death pathways.</title>
        <authorList>
            <person name="Wang Z."/>
            <person name="Jiang H."/>
            <person name="Chen S."/>
            <person name="Du F."/>
            <person name="Wang X."/>
        </authorList>
    </citation>
    <scope>FUNCTION</scope>
</reference>
<proteinExistence type="evidence at transcript level"/>
<accession>Q562B5</accession>
<feature type="chain" id="PRO_0000288784" description="Serine/threonine-protein phosphatase PGAM5, mitochondrial">
    <location>
        <begin position="1"/>
        <end position="288"/>
    </location>
</feature>
<feature type="topological domain" description="Mitochondrial matrix" evidence="2">
    <location>
        <begin position="1"/>
        <end position="6"/>
    </location>
</feature>
<feature type="transmembrane region" description="Helical" evidence="3">
    <location>
        <begin position="7"/>
        <end position="29"/>
    </location>
</feature>
<feature type="topological domain" description="Mitochondrial intermembrane" evidence="2">
    <location>
        <begin position="30"/>
        <end position="288"/>
    </location>
</feature>
<feature type="region of interest" description="Interaction with KEAP1" evidence="1">
    <location>
        <begin position="76"/>
        <end position="81"/>
    </location>
</feature>
<feature type="site" description="Cleavage; by PARL" evidence="2">
    <location>
        <begin position="24"/>
        <end position="25"/>
    </location>
</feature>
<feature type="modified residue" description="Phosphoserine" evidence="2">
    <location>
        <position position="86"/>
    </location>
</feature>
<feature type="modified residue" description="N6-acetyllysine" evidence="2">
    <location>
        <position position="115"/>
    </location>
</feature>
<feature type="modified residue" description="N6-acetyllysine" evidence="2">
    <location>
        <position position="143"/>
    </location>
</feature>
<feature type="modified residue" description="N6-acetyllysine" evidence="2">
    <location>
        <position position="190"/>
    </location>
</feature>
<protein>
    <recommendedName>
        <fullName>Serine/threonine-protein phosphatase PGAM5, mitochondrial</fullName>
        <ecNumber>3.1.3.16</ecNumber>
    </recommendedName>
    <alternativeName>
        <fullName>Phosphoglycerate mutase family member 5</fullName>
    </alternativeName>
</protein>
<organism>
    <name type="scientific">Rattus norvegicus</name>
    <name type="common">Rat</name>
    <dbReference type="NCBI Taxonomy" id="10116"/>
    <lineage>
        <taxon>Eukaryota</taxon>
        <taxon>Metazoa</taxon>
        <taxon>Chordata</taxon>
        <taxon>Craniata</taxon>
        <taxon>Vertebrata</taxon>
        <taxon>Euteleostomi</taxon>
        <taxon>Mammalia</taxon>
        <taxon>Eutheria</taxon>
        <taxon>Euarchontoglires</taxon>
        <taxon>Glires</taxon>
        <taxon>Rodentia</taxon>
        <taxon>Myomorpha</taxon>
        <taxon>Muroidea</taxon>
        <taxon>Muridae</taxon>
        <taxon>Murinae</taxon>
        <taxon>Rattus</taxon>
    </lineage>
</organism>
<keyword id="KW-0007">Acetylation</keyword>
<keyword id="KW-0378">Hydrolase</keyword>
<keyword id="KW-0472">Membrane</keyword>
<keyword id="KW-0496">Mitochondrion</keyword>
<keyword id="KW-0999">Mitochondrion inner membrane</keyword>
<keyword id="KW-1000">Mitochondrion outer membrane</keyword>
<keyword id="KW-1210">Necrosis</keyword>
<keyword id="KW-0597">Phosphoprotein</keyword>
<keyword id="KW-1185">Reference proteome</keyword>
<keyword id="KW-0812">Transmembrane</keyword>
<keyword id="KW-1133">Transmembrane helix</keyword>
<sequence length="288" mass="32060">MAFRQALQLAACGLAGGSAAVLFSAVAVGKPRAGGDADTRTTEPLAWTGARPGHGVWDSNWDRREPLSLINLKKRNVEFGEDELASRLDHYKAKATRHIFLIRHSQYNVDGSMEKDRTLTPLGREQAELTGIRLASLGLKFNKIVHSSMTRAVETTDIISKHLPGVCRVSTDLLREGAPIEPDPPVSHWKPEAVQYYEDGARIEAAFRNYIHRADAKQEEDSYEIFICHANVIRYIVCRALQFPPEGWLRLSLNNGSITHLVIRPNGRVALRTLGDTGFMPPDKITRS</sequence>